<gene>
    <name type="primary">TEL1</name>
    <name type="ordered locus">AGL287W</name>
</gene>
<proteinExistence type="inferred from homology"/>
<name>ATM_EREGS</name>
<protein>
    <recommendedName>
        <fullName>Serine/threonine-protein kinase TEL1</fullName>
        <ecNumber>2.7.11.1</ecNumber>
    </recommendedName>
    <alternativeName>
        <fullName>ATM homolog</fullName>
    </alternativeName>
    <alternativeName>
        <fullName>DNA-damage checkpoint kinase TEL1</fullName>
    </alternativeName>
    <alternativeName>
        <fullName>Telomere length regulation protein 1</fullName>
    </alternativeName>
</protein>
<keyword id="KW-0067">ATP-binding</keyword>
<keyword id="KW-0156">Chromatin regulator</keyword>
<keyword id="KW-0158">Chromosome</keyword>
<keyword id="KW-0175">Coiled coil</keyword>
<keyword id="KW-0227">DNA damage</keyword>
<keyword id="KW-0418">Kinase</keyword>
<keyword id="KW-0547">Nucleotide-binding</keyword>
<keyword id="KW-0539">Nucleus</keyword>
<keyword id="KW-1185">Reference proteome</keyword>
<keyword id="KW-0723">Serine/threonine-protein kinase</keyword>
<keyword id="KW-0779">Telomere</keyword>
<keyword id="KW-0808">Transferase</keyword>
<accession>Q751J3</accession>
<sequence>MEQYVASAINLLSSPKLKERSQALTDVAAIVKDNPDTLTSKSVGALVQSLIDILDAETRKFDELCRRRPEAGARVELAQGRLNSVVAVLRLVLETIPDRLRAKQFRGLVLSLPELLGWAIREQVHDMLQPLSACLQALTECHTFKLKVDDGQWRTLVRASAEDLVALFGINCTHKSIAKLAGALTSLIRMDAVGFKDVCEELLLIPVRYYQNTDKETANMRSILQLCNLLVLKGHLIKFHGVQYLIHCTMQHLLQFTLPGTDYILEEIAVFTLFSAELMIHEVPYIPGDLESGRYFGKEVLSELYQQFIVHLLENYRPQKLQLKDLEYRLLLDRRQWYQLDDFQISPHASHIEWLQLQGISNMLCSYYAFQHRHPVMDISQVKRRRLSDTYNSFLLNSQYGISFATSCIDSNPVSSQLLGLQLAACVTSFHECPKYQLEELLDAILRRFENANLVGWCCLAMLPLCSQLDLVISETVLQKLLKLTLPLLKIPTLSAVASALISKLLDYQQRTLTGSNMLQQCYDLYELSDIIGPAVVSNESFRLWQSLHIYGGDFRGKDGSSAADRIANWLFAKLNTVSPLDESQNSFPHFLGWLAGCQLKDAYEVNRAIHVNSYCLEWEYTSVERTFLLSIETSRRLSRNRTTPLQNMNYESSSISELFYRILDKITSQDDIEAYGWMCFGLQLIHHIRELTYLVEYVNDLKKAICLRLGKMNFGNSQILLSCIRQTTSLPSCDILPLFFTEREIANIIYTYKELKLTEVPEGPAEDDFAGPAKARHKLYPLNHLYAGKQGFEIDYVVSFIIMCSDYETNGDAAEKVIELFLQLARSLPTNLIFQALPTLITYIGSNDRENISEDTLLALTEFTGSSLLTNEYNTSTLSITYLSLFLKSISRYWLSDTHMPSLTADCNDILEWIFSRLGDSSCIGCEAIMAILDMTLHMLKNYNRSNSKFTFDKQHLFHVLTTCLGRLPKFYICKVVHELNSYVVRLGLKNQSIIFSEFAGLFDPPQRDAETAAYYSLTLAGLGTISHMHLSNAILHVLPNLQHKHVSQYALSFLKSVAGFHKLSGIRALFHLCRFEILDIWSNKCAGLRDFSPIWNTAIFQFESFEQFINEYKHEVAAYYFAKLSPYHYLKSTLVNDDKELPQLLEISLQYAIPLAYIPGGIGDAIFDICADQWSATNHTNVLKQQYLLIFDRLLHFADLTVFMEYFESLQKVYTNSELIHKMKKYTYNLHPKHLLSYSLRTALKVIHSKVLLGKLSIQELRFLLTLNLQYLQESTLPDDRSQILRKIQIILVAYEQQLEDASSVSDLLEILTDYLDDPLLGNEVGALIGSIVALGFNVKYTESLFLCIFAKLLPQLHEAKTANLSILLNDISNTLTINNSNIIHGKWWHACIDALAGTSLFENTIYHDDSLLDTELLDHRALNLYSEILSFLPPFTGFPPNFVPKERVLRHLISQTTTFKLHDNFLLWKGHYIGMYHKFHGTIPQLAPNGPNQKLSIDKLVKNYGLLNGIFELLEAIEKTTHARIKFICQCINAVSLSHKDSLSTFTADTQQFFGQLSSKSVPLDLALFFYMFPISNPSESMETFCRLHYPALTSDYSSWLVKLTMFALDMLGRYIPVVKCFEVLATAITSRVEQLLNYWLLLLLYCDPNNGIRLLCTLISNIGLLKSTKEGILKIKYMLNLLLIVRSFHKLGYKEFDTIYDRISLQDAYKVAAEVGEKYIACLLFEEFHMPNLARLDVTYMKEIYKQFDDVDMIYGIPTTASLASAIELINQTQATSLKSFMMNNGNFDAQYATHFTGNIGNLVNSASNNGFTGLAYALQNISSSKNTSATYNWCIELDKWDLPTPDILDSTAKSIYSIIKKTDINTGTAEAAFKSTMLNALQFLEKTGVNEDNVSQLGSIVTMVQLYNNNAEKLVKSLHAQDRKILKVKDFNDYYMDIKVRHVFLDHLIDSHKNRLSEEQSICLRFASICELSHLSEVARGASDFQRSLDAVLLLEKSVLALPTNSSVEHYGLFKTFARRMSTIQSAKMLWSQNETVMSIDMLKDLLHTPLSSNLIARARKQPFFQQMAILDINVKAQLVQWLSHSRQDVPERIFKNYIGTSLQDIENYGDNPSRTEIVHTFGKFCYDQAKRFSETNEVDIMARRVSKNKEELAALYQLYHDRSLPERERKEAKRHYARLLVRNQQETETYNQLRDQRELFVTNALLFFTQTLQYDDLYDGEVIDQFCGLWFEYSNDDNVSGKLLSNLQNIPEYKLLPWINQMASKLADDESPFQKTLRAAMVRILLKLPYDSLYVLIGMSLTGSRQNAKDSGSQSRLVAVESLLKEVSKHDYGSYATKYLLPVREFCEMSVSLASQKFAQNTRKIHLNNLKIGTYWLKELKGRKLPLPTAQSRVSDRCGNSVSRSYITQVDPDVRIASSGLSLPKIVTFTLSDGTRHRALLKAGNDDLRQDAIMEQVFKQVNKILTSNKRTRKLKLRIRTYEVIPLGPQAGIIEFAPNSKSLHEILAGYHKDDTISLEQARKAMKAVQGKSKEQRIAVYVKITESVKPVLRNFFYETFLDPEEWLLAKATYTKGVVTNSIVGHILGLGDRHLNNILLDKFTGEPIHIDLGVAFDQGKLLPLPELVPFRLTRDIVDGFGVMGVEGLFRKNCEKVYGLLRKERERVMCVLNVLKWDPLYSWKMTPLRRQKLQGKLVDGDSPSDSLVTSLPDSSDNDESRRALKGVEDKLLGNGLSVEATVQELVHRATDVSNLAVIFMGWSPFY</sequence>
<dbReference type="EC" id="2.7.11.1"/>
<dbReference type="EMBL" id="AE016820">
    <property type="protein sequence ID" value="AAS54204.1"/>
    <property type="molecule type" value="Genomic_DNA"/>
</dbReference>
<dbReference type="RefSeq" id="NP_986380.1">
    <property type="nucleotide sequence ID" value="NM_211442.1"/>
</dbReference>
<dbReference type="SMR" id="Q751J3"/>
<dbReference type="FunCoup" id="Q751J3">
    <property type="interactions" value="109"/>
</dbReference>
<dbReference type="STRING" id="284811.Q751J3"/>
<dbReference type="EnsemblFungi" id="AAS54204">
    <property type="protein sequence ID" value="AAS54204"/>
    <property type="gene ID" value="AGOS_AGL287W"/>
</dbReference>
<dbReference type="GeneID" id="4622673"/>
<dbReference type="KEGG" id="ago:AGOS_AGL287W"/>
<dbReference type="eggNOG" id="KOG0892">
    <property type="taxonomic scope" value="Eukaryota"/>
</dbReference>
<dbReference type="HOGENOM" id="CLU_000178_8_1_1"/>
<dbReference type="InParanoid" id="Q751J3"/>
<dbReference type="OMA" id="IYMGWSP"/>
<dbReference type="OrthoDB" id="381190at2759"/>
<dbReference type="Proteomes" id="UP000000591">
    <property type="component" value="Chromosome VII"/>
</dbReference>
<dbReference type="GO" id="GO:0005694">
    <property type="term" value="C:chromosome"/>
    <property type="evidence" value="ECO:0000318"/>
    <property type="project" value="GO_Central"/>
</dbReference>
<dbReference type="GO" id="GO:0000781">
    <property type="term" value="C:chromosome, telomeric region"/>
    <property type="evidence" value="ECO:0007669"/>
    <property type="project" value="UniProtKB-SubCell"/>
</dbReference>
<dbReference type="GO" id="GO:0005634">
    <property type="term" value="C:nucleus"/>
    <property type="evidence" value="ECO:0000318"/>
    <property type="project" value="GO_Central"/>
</dbReference>
<dbReference type="GO" id="GO:0005524">
    <property type="term" value="F:ATP binding"/>
    <property type="evidence" value="ECO:0007669"/>
    <property type="project" value="UniProtKB-KW"/>
</dbReference>
<dbReference type="GO" id="GO:0070273">
    <property type="term" value="F:phosphatidylinositol-4-phosphate binding"/>
    <property type="evidence" value="ECO:0007669"/>
    <property type="project" value="EnsemblFungi"/>
</dbReference>
<dbReference type="GO" id="GO:0106310">
    <property type="term" value="F:protein serine kinase activity"/>
    <property type="evidence" value="ECO:0007669"/>
    <property type="project" value="RHEA"/>
</dbReference>
<dbReference type="GO" id="GO:0004674">
    <property type="term" value="F:protein serine/threonine kinase activity"/>
    <property type="evidence" value="ECO:0000318"/>
    <property type="project" value="GO_Central"/>
</dbReference>
<dbReference type="GO" id="GO:0042162">
    <property type="term" value="F:telomeric DNA binding"/>
    <property type="evidence" value="ECO:0007669"/>
    <property type="project" value="EnsemblFungi"/>
</dbReference>
<dbReference type="GO" id="GO:0006325">
    <property type="term" value="P:chromatin organization"/>
    <property type="evidence" value="ECO:0007669"/>
    <property type="project" value="UniProtKB-KW"/>
</dbReference>
<dbReference type="GO" id="GO:0000077">
    <property type="term" value="P:DNA damage checkpoint signaling"/>
    <property type="evidence" value="ECO:0000318"/>
    <property type="project" value="GO_Central"/>
</dbReference>
<dbReference type="GO" id="GO:0006302">
    <property type="term" value="P:double-strand break repair"/>
    <property type="evidence" value="ECO:0000318"/>
    <property type="project" value="GO_Central"/>
</dbReference>
<dbReference type="GO" id="GO:0000723">
    <property type="term" value="P:telomere maintenance"/>
    <property type="evidence" value="ECO:0000318"/>
    <property type="project" value="GO_Central"/>
</dbReference>
<dbReference type="CDD" id="cd05171">
    <property type="entry name" value="PIKKc_ATM"/>
    <property type="match status" value="1"/>
</dbReference>
<dbReference type="FunFam" id="3.30.1010.10:FF:000032">
    <property type="entry name" value="Serine/threonine-protein kinase TEL1"/>
    <property type="match status" value="1"/>
</dbReference>
<dbReference type="FunFam" id="1.10.1070.11:FF:000038">
    <property type="entry name" value="Serine/threonine-protein kinase Tel1"/>
    <property type="match status" value="1"/>
</dbReference>
<dbReference type="Gene3D" id="1.10.1070.11">
    <property type="entry name" value="Phosphatidylinositol 3-/4-kinase, catalytic domain"/>
    <property type="match status" value="1"/>
</dbReference>
<dbReference type="Gene3D" id="3.30.1010.10">
    <property type="entry name" value="Phosphatidylinositol 3-kinase Catalytic Subunit, Chain A, domain 4"/>
    <property type="match status" value="1"/>
</dbReference>
<dbReference type="InterPro" id="IPR038980">
    <property type="entry name" value="ATM_plant"/>
</dbReference>
<dbReference type="InterPro" id="IPR003152">
    <property type="entry name" value="FATC_dom"/>
</dbReference>
<dbReference type="InterPro" id="IPR011009">
    <property type="entry name" value="Kinase-like_dom_sf"/>
</dbReference>
<dbReference type="InterPro" id="IPR000403">
    <property type="entry name" value="PI3/4_kinase_cat_dom"/>
</dbReference>
<dbReference type="InterPro" id="IPR036940">
    <property type="entry name" value="PI3/4_kinase_cat_sf"/>
</dbReference>
<dbReference type="InterPro" id="IPR018936">
    <property type="entry name" value="PI3/4_kinase_CS"/>
</dbReference>
<dbReference type="InterPro" id="IPR014009">
    <property type="entry name" value="PIK_FAT"/>
</dbReference>
<dbReference type="InterPro" id="IPR044107">
    <property type="entry name" value="PIKKc_ATM"/>
</dbReference>
<dbReference type="InterPro" id="IPR021668">
    <property type="entry name" value="TAN"/>
</dbReference>
<dbReference type="PANTHER" id="PTHR37079">
    <property type="entry name" value="SERINE/THREONINE-PROTEIN KINASE ATM"/>
    <property type="match status" value="1"/>
</dbReference>
<dbReference type="PANTHER" id="PTHR37079:SF4">
    <property type="entry name" value="SERINE_THREONINE-PROTEIN KINASE ATM"/>
    <property type="match status" value="1"/>
</dbReference>
<dbReference type="Pfam" id="PF02260">
    <property type="entry name" value="FATC"/>
    <property type="match status" value="1"/>
</dbReference>
<dbReference type="Pfam" id="PF00454">
    <property type="entry name" value="PI3_PI4_kinase"/>
    <property type="match status" value="1"/>
</dbReference>
<dbReference type="Pfam" id="PF11640">
    <property type="entry name" value="TAN"/>
    <property type="match status" value="1"/>
</dbReference>
<dbReference type="SMART" id="SM01343">
    <property type="entry name" value="FATC"/>
    <property type="match status" value="1"/>
</dbReference>
<dbReference type="SMART" id="SM00146">
    <property type="entry name" value="PI3Kc"/>
    <property type="match status" value="1"/>
</dbReference>
<dbReference type="SMART" id="SM01342">
    <property type="entry name" value="TAN"/>
    <property type="match status" value="1"/>
</dbReference>
<dbReference type="SUPFAM" id="SSF56112">
    <property type="entry name" value="Protein kinase-like (PK-like)"/>
    <property type="match status" value="1"/>
</dbReference>
<dbReference type="PROSITE" id="PS51189">
    <property type="entry name" value="FAT"/>
    <property type="match status" value="1"/>
</dbReference>
<dbReference type="PROSITE" id="PS51190">
    <property type="entry name" value="FATC"/>
    <property type="match status" value="1"/>
</dbReference>
<dbReference type="PROSITE" id="PS00915">
    <property type="entry name" value="PI3_4_KINASE_1"/>
    <property type="match status" value="1"/>
</dbReference>
<dbReference type="PROSITE" id="PS00916">
    <property type="entry name" value="PI3_4_KINASE_2"/>
    <property type="match status" value="1"/>
</dbReference>
<dbReference type="PROSITE" id="PS50290">
    <property type="entry name" value="PI3_4_KINASE_3"/>
    <property type="match status" value="1"/>
</dbReference>
<feature type="chain" id="PRO_0000227695" description="Serine/threonine-protein kinase TEL1">
    <location>
        <begin position="1"/>
        <end position="2768"/>
    </location>
</feature>
<feature type="domain" description="FAT" evidence="4">
    <location>
        <begin position="1825"/>
        <end position="2308"/>
    </location>
</feature>
<feature type="domain" description="PI3K/PI4K catalytic" evidence="3">
    <location>
        <begin position="2417"/>
        <end position="2724"/>
    </location>
</feature>
<feature type="domain" description="FATC" evidence="4 5">
    <location>
        <begin position="2736"/>
        <end position="2768"/>
    </location>
</feature>
<feature type="region of interest" description="G-loop" evidence="3">
    <location>
        <begin position="2423"/>
        <end position="2429"/>
    </location>
</feature>
<feature type="region of interest" description="Catalytic loop" evidence="3">
    <location>
        <begin position="2592"/>
        <end position="2600"/>
    </location>
</feature>
<feature type="region of interest" description="Activation loop" evidence="3">
    <location>
        <begin position="2612"/>
        <end position="2636"/>
    </location>
</feature>
<feature type="region of interest" description="Disordered" evidence="6">
    <location>
        <begin position="2696"/>
        <end position="2722"/>
    </location>
</feature>
<feature type="coiled-coil region" evidence="2">
    <location>
        <begin position="2141"/>
        <end position="2204"/>
    </location>
</feature>
<feature type="compositionally biased region" description="Polar residues" evidence="6">
    <location>
        <begin position="2705"/>
        <end position="2716"/>
    </location>
</feature>
<comment type="function">
    <text evidence="1">Serine/threonine protein kinase which activates checkpoint signaling upon genotoxic stresses such as ionizing radiation (IR), ultraviolet light (UV), or DNA replication stalling, thereby acting as a DNA damage sensor. Recognizes the substrate consensus sequence [ST]-Q. Phosphorylates histone H2A to form H2AS128ph (gamma-H2A) at sites of DNA damage, involved in the regulation of DNA damage response mechanism. Required for the control of telomere length and genome stability (By similarity).</text>
</comment>
<comment type="catalytic activity">
    <reaction>
        <text>L-seryl-[protein] + ATP = O-phospho-L-seryl-[protein] + ADP + H(+)</text>
        <dbReference type="Rhea" id="RHEA:17989"/>
        <dbReference type="Rhea" id="RHEA-COMP:9863"/>
        <dbReference type="Rhea" id="RHEA-COMP:11604"/>
        <dbReference type="ChEBI" id="CHEBI:15378"/>
        <dbReference type="ChEBI" id="CHEBI:29999"/>
        <dbReference type="ChEBI" id="CHEBI:30616"/>
        <dbReference type="ChEBI" id="CHEBI:83421"/>
        <dbReference type="ChEBI" id="CHEBI:456216"/>
        <dbReference type="EC" id="2.7.11.1"/>
    </reaction>
</comment>
<comment type="catalytic activity">
    <reaction>
        <text>L-threonyl-[protein] + ATP = O-phospho-L-threonyl-[protein] + ADP + H(+)</text>
        <dbReference type="Rhea" id="RHEA:46608"/>
        <dbReference type="Rhea" id="RHEA-COMP:11060"/>
        <dbReference type="Rhea" id="RHEA-COMP:11605"/>
        <dbReference type="ChEBI" id="CHEBI:15378"/>
        <dbReference type="ChEBI" id="CHEBI:30013"/>
        <dbReference type="ChEBI" id="CHEBI:30616"/>
        <dbReference type="ChEBI" id="CHEBI:61977"/>
        <dbReference type="ChEBI" id="CHEBI:456216"/>
        <dbReference type="EC" id="2.7.11.1"/>
    </reaction>
</comment>
<comment type="subunit">
    <text evidence="1">Associates with DNA double-strand breaks.</text>
</comment>
<comment type="subcellular location">
    <subcellularLocation>
        <location evidence="1">Nucleus</location>
    </subcellularLocation>
    <subcellularLocation>
        <location evidence="1">Chromosome</location>
        <location evidence="1">Telomere</location>
    </subcellularLocation>
    <text evidence="1">Localizes to nuclear DNA repair foci with other DNA repair proteins in response to DNA double strand breaks.</text>
</comment>
<comment type="similarity">
    <text evidence="7">Belongs to the PI3/PI4-kinase family. ATM subfamily.</text>
</comment>
<reference key="1">
    <citation type="journal article" date="2004" name="Science">
        <title>The Ashbya gossypii genome as a tool for mapping the ancient Saccharomyces cerevisiae genome.</title>
        <authorList>
            <person name="Dietrich F.S."/>
            <person name="Voegeli S."/>
            <person name="Brachat S."/>
            <person name="Lerch A."/>
            <person name="Gates K."/>
            <person name="Steiner S."/>
            <person name="Mohr C."/>
            <person name="Poehlmann R."/>
            <person name="Luedi P."/>
            <person name="Choi S."/>
            <person name="Wing R.A."/>
            <person name="Flavier A."/>
            <person name="Gaffney T.D."/>
            <person name="Philippsen P."/>
        </authorList>
    </citation>
    <scope>NUCLEOTIDE SEQUENCE [LARGE SCALE GENOMIC DNA]</scope>
    <source>
        <strain>ATCC 10895 / CBS 109.51 / FGSC 9923 / NRRL Y-1056</strain>
    </source>
</reference>
<reference key="2">
    <citation type="journal article" date="2013" name="G3 (Bethesda)">
        <title>Genomes of Ashbya fungi isolated from insects reveal four mating-type loci, numerous translocations, lack of transposons, and distinct gene duplications.</title>
        <authorList>
            <person name="Dietrich F.S."/>
            <person name="Voegeli S."/>
            <person name="Kuo S."/>
            <person name="Philippsen P."/>
        </authorList>
    </citation>
    <scope>GENOME REANNOTATION</scope>
    <source>
        <strain>ATCC 10895 / CBS 109.51 / FGSC 9923 / NRRL Y-1056</strain>
    </source>
</reference>
<evidence type="ECO:0000250" key="1"/>
<evidence type="ECO:0000255" key="2"/>
<evidence type="ECO:0000255" key="3">
    <source>
        <dbReference type="PROSITE-ProRule" id="PRU00269"/>
    </source>
</evidence>
<evidence type="ECO:0000255" key="4">
    <source>
        <dbReference type="PROSITE-ProRule" id="PRU00534"/>
    </source>
</evidence>
<evidence type="ECO:0000255" key="5">
    <source>
        <dbReference type="PROSITE-ProRule" id="PRU00535"/>
    </source>
</evidence>
<evidence type="ECO:0000256" key="6">
    <source>
        <dbReference type="SAM" id="MobiDB-lite"/>
    </source>
</evidence>
<evidence type="ECO:0000305" key="7"/>
<organism>
    <name type="scientific">Eremothecium gossypii (strain ATCC 10895 / CBS 109.51 / FGSC 9923 / NRRL Y-1056)</name>
    <name type="common">Yeast</name>
    <name type="synonym">Ashbya gossypii</name>
    <dbReference type="NCBI Taxonomy" id="284811"/>
    <lineage>
        <taxon>Eukaryota</taxon>
        <taxon>Fungi</taxon>
        <taxon>Dikarya</taxon>
        <taxon>Ascomycota</taxon>
        <taxon>Saccharomycotina</taxon>
        <taxon>Saccharomycetes</taxon>
        <taxon>Saccharomycetales</taxon>
        <taxon>Saccharomycetaceae</taxon>
        <taxon>Eremothecium</taxon>
    </lineage>
</organism>